<organism>
    <name type="scientific">Aliivibrio salmonicida (strain LFI1238)</name>
    <name type="common">Vibrio salmonicida (strain LFI1238)</name>
    <dbReference type="NCBI Taxonomy" id="316275"/>
    <lineage>
        <taxon>Bacteria</taxon>
        <taxon>Pseudomonadati</taxon>
        <taxon>Pseudomonadota</taxon>
        <taxon>Gammaproteobacteria</taxon>
        <taxon>Vibrionales</taxon>
        <taxon>Vibrionaceae</taxon>
        <taxon>Aliivibrio</taxon>
    </lineage>
</organism>
<protein>
    <recommendedName>
        <fullName evidence="1">UPF0301 protein VSAL_I0547</fullName>
    </recommendedName>
</protein>
<accession>B6EMV3</accession>
<gene>
    <name type="ordered locus">VSAL_I0547</name>
</gene>
<sequence>MDLKNHFLVAMPSMNDPVFTRSVIYICEHDSDGTMGLRINQPVQISLKGMLDQIKLDNPSPIIFPQTLSQPVLNGGPVSDDRGFVLHYPKDNYSSSIEVTEELSVTTSKDILATLGTEDQPYKYLVALGYSGWDAGQLEQELSENTWLILEADSSVIFDTPIPDRWRRAIEILGISPVNISSEVGHA</sequence>
<name>Y547_ALISL</name>
<evidence type="ECO:0000255" key="1">
    <source>
        <dbReference type="HAMAP-Rule" id="MF_00758"/>
    </source>
</evidence>
<reference key="1">
    <citation type="journal article" date="2008" name="BMC Genomics">
        <title>The genome sequence of the fish pathogen Aliivibrio salmonicida strain LFI1238 shows extensive evidence of gene decay.</title>
        <authorList>
            <person name="Hjerde E."/>
            <person name="Lorentzen M.S."/>
            <person name="Holden M.T."/>
            <person name="Seeger K."/>
            <person name="Paulsen S."/>
            <person name="Bason N."/>
            <person name="Churcher C."/>
            <person name="Harris D."/>
            <person name="Norbertczak H."/>
            <person name="Quail M.A."/>
            <person name="Sanders S."/>
            <person name="Thurston S."/>
            <person name="Parkhill J."/>
            <person name="Willassen N.P."/>
            <person name="Thomson N.R."/>
        </authorList>
    </citation>
    <scope>NUCLEOTIDE SEQUENCE [LARGE SCALE GENOMIC DNA]</scope>
    <source>
        <strain>LFI1238</strain>
    </source>
</reference>
<comment type="similarity">
    <text evidence="1">Belongs to the UPF0301 (AlgH) family.</text>
</comment>
<proteinExistence type="inferred from homology"/>
<dbReference type="EMBL" id="FM178379">
    <property type="protein sequence ID" value="CAQ78232.1"/>
    <property type="molecule type" value="Genomic_DNA"/>
</dbReference>
<dbReference type="RefSeq" id="WP_012549356.1">
    <property type="nucleotide sequence ID" value="NC_011312.1"/>
</dbReference>
<dbReference type="SMR" id="B6EMV3"/>
<dbReference type="KEGG" id="vsa:VSAL_I0547"/>
<dbReference type="eggNOG" id="COG1678">
    <property type="taxonomic scope" value="Bacteria"/>
</dbReference>
<dbReference type="HOGENOM" id="CLU_057596_1_0_6"/>
<dbReference type="Proteomes" id="UP000001730">
    <property type="component" value="Chromosome 1"/>
</dbReference>
<dbReference type="GO" id="GO:0005829">
    <property type="term" value="C:cytosol"/>
    <property type="evidence" value="ECO:0007669"/>
    <property type="project" value="TreeGrafter"/>
</dbReference>
<dbReference type="Gene3D" id="3.40.1740.10">
    <property type="entry name" value="VC0467-like"/>
    <property type="match status" value="1"/>
</dbReference>
<dbReference type="Gene3D" id="3.30.70.1300">
    <property type="entry name" value="VC0467-like domains"/>
    <property type="match status" value="1"/>
</dbReference>
<dbReference type="HAMAP" id="MF_00758">
    <property type="entry name" value="UPF0301"/>
    <property type="match status" value="1"/>
</dbReference>
<dbReference type="InterPro" id="IPR003774">
    <property type="entry name" value="AlgH-like"/>
</dbReference>
<dbReference type="NCBIfam" id="NF001266">
    <property type="entry name" value="PRK00228.1-1"/>
    <property type="match status" value="1"/>
</dbReference>
<dbReference type="PANTHER" id="PTHR30327">
    <property type="entry name" value="UNCHARACTERIZED PROTEIN YQGE"/>
    <property type="match status" value="1"/>
</dbReference>
<dbReference type="PANTHER" id="PTHR30327:SF1">
    <property type="entry name" value="UPF0301 PROTEIN YQGE"/>
    <property type="match status" value="1"/>
</dbReference>
<dbReference type="Pfam" id="PF02622">
    <property type="entry name" value="DUF179"/>
    <property type="match status" value="1"/>
</dbReference>
<dbReference type="SUPFAM" id="SSF143456">
    <property type="entry name" value="VC0467-like"/>
    <property type="match status" value="1"/>
</dbReference>
<feature type="chain" id="PRO_1000198251" description="UPF0301 protein VSAL_I0547">
    <location>
        <begin position="1"/>
        <end position="187"/>
    </location>
</feature>